<gene>
    <name evidence="2" type="primary">chac2</name>
</gene>
<protein>
    <recommendedName>
        <fullName evidence="2">Putative glutathione-specific gamma-glutamylcyclotransferase 2</fullName>
        <shortName evidence="2">Gamma-GCG 2</shortName>
        <ecNumber evidence="2">4.3.2.7</ecNumber>
    </recommendedName>
    <alternativeName>
        <fullName evidence="3">Cation transport regulator-like protein 2</fullName>
    </alternativeName>
</protein>
<dbReference type="EC" id="4.3.2.7" evidence="2"/>
<dbReference type="EMBL" id="BC087482">
    <property type="protein sequence ID" value="AAH87482.1"/>
    <property type="molecule type" value="mRNA"/>
</dbReference>
<dbReference type="RefSeq" id="NP_001088800.1">
    <property type="nucleotide sequence ID" value="NM_001095331.1"/>
</dbReference>
<dbReference type="SMR" id="Q5PPV4"/>
<dbReference type="DNASU" id="496068"/>
<dbReference type="GeneID" id="496068"/>
<dbReference type="KEGG" id="xla:496068"/>
<dbReference type="AGR" id="Xenbase:XB-GENE-5817366"/>
<dbReference type="CTD" id="496068"/>
<dbReference type="Xenbase" id="XB-GENE-5817366">
    <property type="gene designation" value="chac2.S"/>
</dbReference>
<dbReference type="OMA" id="DHREKDG"/>
<dbReference type="OrthoDB" id="1933483at2759"/>
<dbReference type="Proteomes" id="UP000186698">
    <property type="component" value="Chromosome 5S"/>
</dbReference>
<dbReference type="Bgee" id="496068">
    <property type="expression patterns" value="Expressed in oocyte and 19 other cell types or tissues"/>
</dbReference>
<dbReference type="GO" id="GO:0005737">
    <property type="term" value="C:cytoplasm"/>
    <property type="evidence" value="ECO:0000318"/>
    <property type="project" value="GO_Central"/>
</dbReference>
<dbReference type="GO" id="GO:0061928">
    <property type="term" value="F:glutathione specific gamma-glutamylcyclotransferase activity"/>
    <property type="evidence" value="ECO:0000318"/>
    <property type="project" value="GO_Central"/>
</dbReference>
<dbReference type="GO" id="GO:0006751">
    <property type="term" value="P:glutathione catabolic process"/>
    <property type="evidence" value="ECO:0000318"/>
    <property type="project" value="GO_Central"/>
</dbReference>
<dbReference type="CDD" id="cd06661">
    <property type="entry name" value="GGCT_like"/>
    <property type="match status" value="1"/>
</dbReference>
<dbReference type="FunFam" id="3.10.490.10:FF:000003">
    <property type="entry name" value="Gamma-glutamylcyclotransferase"/>
    <property type="match status" value="1"/>
</dbReference>
<dbReference type="Gene3D" id="3.10.490.10">
    <property type="entry name" value="Gamma-glutamyl cyclotransferase-like"/>
    <property type="match status" value="1"/>
</dbReference>
<dbReference type="InterPro" id="IPR006840">
    <property type="entry name" value="ChaC"/>
</dbReference>
<dbReference type="InterPro" id="IPR013024">
    <property type="entry name" value="GGCT-like"/>
</dbReference>
<dbReference type="InterPro" id="IPR036568">
    <property type="entry name" value="GGCT-like_sf"/>
</dbReference>
<dbReference type="PANTHER" id="PTHR12192">
    <property type="entry name" value="CATION TRANSPORT PROTEIN CHAC-RELATED"/>
    <property type="match status" value="1"/>
</dbReference>
<dbReference type="PANTHER" id="PTHR12192:SF2">
    <property type="entry name" value="GLUTATHIONE-SPECIFIC GAMMA-GLUTAMYLCYCLOTRANSFERASE 2"/>
    <property type="match status" value="1"/>
</dbReference>
<dbReference type="Pfam" id="PF04752">
    <property type="entry name" value="ChaC"/>
    <property type="match status" value="1"/>
</dbReference>
<dbReference type="SUPFAM" id="SSF110857">
    <property type="entry name" value="Gamma-glutamyl cyclotransferase-like"/>
    <property type="match status" value="1"/>
</dbReference>
<organism>
    <name type="scientific">Xenopus laevis</name>
    <name type="common">African clawed frog</name>
    <dbReference type="NCBI Taxonomy" id="8355"/>
    <lineage>
        <taxon>Eukaryota</taxon>
        <taxon>Metazoa</taxon>
        <taxon>Chordata</taxon>
        <taxon>Craniata</taxon>
        <taxon>Vertebrata</taxon>
        <taxon>Euteleostomi</taxon>
        <taxon>Amphibia</taxon>
        <taxon>Batrachia</taxon>
        <taxon>Anura</taxon>
        <taxon>Pipoidea</taxon>
        <taxon>Pipidae</taxon>
        <taxon>Xenopodinae</taxon>
        <taxon>Xenopus</taxon>
        <taxon>Xenopus</taxon>
    </lineage>
</organism>
<reference key="1">
    <citation type="submission" date="2004-12" db="EMBL/GenBank/DDBJ databases">
        <authorList>
            <consortium name="NIH - Xenopus Gene Collection (XGC) project"/>
        </authorList>
    </citation>
    <scope>NUCLEOTIDE SEQUENCE [LARGE SCALE MRNA]</scope>
    <source>
        <tissue>Testis</tissue>
    </source>
</reference>
<comment type="function">
    <text evidence="2">Catalyzes the cleavage of glutathione into 5-oxo-L-proline and a Cys-Gly dipeptide. Acts specifically on glutathione, but not on other gamma-glutamyl peptides.</text>
</comment>
<comment type="catalytic activity">
    <reaction evidence="2">
        <text>glutathione = L-cysteinylglycine + 5-oxo-L-proline</text>
        <dbReference type="Rhea" id="RHEA:47724"/>
        <dbReference type="ChEBI" id="CHEBI:57925"/>
        <dbReference type="ChEBI" id="CHEBI:58402"/>
        <dbReference type="ChEBI" id="CHEBI:61694"/>
        <dbReference type="EC" id="4.3.2.7"/>
    </reaction>
</comment>
<comment type="similarity">
    <text evidence="4">Belongs to the gamma-glutamylcyclotransferase family. ChaC subfamily.</text>
</comment>
<keyword id="KW-0456">Lyase</keyword>
<keyword id="KW-1185">Reference proteome</keyword>
<feature type="chain" id="PRO_0000314917" description="Putative glutathione-specific gamma-glutamylcyclotransferase 2">
    <location>
        <begin position="1"/>
        <end position="184"/>
    </location>
</feature>
<feature type="active site" description="Proton acceptor" evidence="1">
    <location>
        <position position="83"/>
    </location>
</feature>
<feature type="binding site" evidence="1">
    <location>
        <begin position="3"/>
        <end position="8"/>
    </location>
    <ligand>
        <name>substrate</name>
    </ligand>
</feature>
<accession>Q5PPV4</accession>
<sequence length="184" mass="21002">MWVFGYGSLIWKVDFPYVEKLVGYIMCYSRRFWQGSTDHRGVPGKPGRVVTLVEDPEGCVWGVAYRLPEGKEEEVKAYLDFREKGGYRTSTVVFYPKDPSIQPFNVLLYIGTCDNPNYLGPAPLEDIAEQILNAVGPSGRNTEYLFELANSLRNLVPEDADEHLFSLEKLVRQLSEAHRNLNHL</sequence>
<proteinExistence type="evidence at transcript level"/>
<name>CHAC2_XENLA</name>
<evidence type="ECO:0000250" key="1">
    <source>
        <dbReference type="UniProtKB" id="O75223"/>
    </source>
</evidence>
<evidence type="ECO:0000250" key="2">
    <source>
        <dbReference type="UniProtKB" id="Q8WUX2"/>
    </source>
</evidence>
<evidence type="ECO:0000250" key="3">
    <source>
        <dbReference type="UniProtKB" id="Q9BUX1"/>
    </source>
</evidence>
<evidence type="ECO:0000305" key="4"/>